<reference key="1">
    <citation type="submission" date="2008-02" db="EMBL/GenBank/DDBJ databases">
        <title>Complete sequence of Haemophilus somnus 2336.</title>
        <authorList>
            <consortium name="US DOE Joint Genome Institute"/>
            <person name="Siddaramappa S."/>
            <person name="Duncan A.J."/>
            <person name="Challacombe J.F."/>
            <person name="Rainey D."/>
            <person name="Gillaspy A.F."/>
            <person name="Carson M."/>
            <person name="Gipson J."/>
            <person name="Gipson M."/>
            <person name="Bruce D."/>
            <person name="Detter J.C."/>
            <person name="Han C.S."/>
            <person name="Land M."/>
            <person name="Tapia R."/>
            <person name="Thompson L.S."/>
            <person name="Orvis J."/>
            <person name="Zaitshik J."/>
            <person name="Barnes G."/>
            <person name="Brettin T.S."/>
            <person name="Dyer D.W."/>
            <person name="Inzana T.J."/>
        </authorList>
    </citation>
    <scope>NUCLEOTIDE SEQUENCE [LARGE SCALE GENOMIC DNA]</scope>
    <source>
        <strain>2336</strain>
    </source>
</reference>
<dbReference type="EC" id="2.4.1.182" evidence="1"/>
<dbReference type="EMBL" id="CP000947">
    <property type="protein sequence ID" value="ACA31884.1"/>
    <property type="molecule type" value="Genomic_DNA"/>
</dbReference>
<dbReference type="RefSeq" id="WP_012341127.1">
    <property type="nucleotide sequence ID" value="NC_010519.1"/>
</dbReference>
<dbReference type="SMR" id="B0UW62"/>
<dbReference type="STRING" id="228400.HSM_0257"/>
<dbReference type="CAZy" id="GT19">
    <property type="family name" value="Glycosyltransferase Family 19"/>
</dbReference>
<dbReference type="GeneID" id="31486537"/>
<dbReference type="KEGG" id="hsm:HSM_0257"/>
<dbReference type="HOGENOM" id="CLU_036577_3_0_6"/>
<dbReference type="UniPathway" id="UPA00973"/>
<dbReference type="GO" id="GO:0016020">
    <property type="term" value="C:membrane"/>
    <property type="evidence" value="ECO:0007669"/>
    <property type="project" value="GOC"/>
</dbReference>
<dbReference type="GO" id="GO:0008915">
    <property type="term" value="F:lipid-A-disaccharide synthase activity"/>
    <property type="evidence" value="ECO:0007669"/>
    <property type="project" value="UniProtKB-UniRule"/>
</dbReference>
<dbReference type="GO" id="GO:0005543">
    <property type="term" value="F:phospholipid binding"/>
    <property type="evidence" value="ECO:0007669"/>
    <property type="project" value="TreeGrafter"/>
</dbReference>
<dbReference type="GO" id="GO:0009245">
    <property type="term" value="P:lipid A biosynthetic process"/>
    <property type="evidence" value="ECO:0007669"/>
    <property type="project" value="UniProtKB-UniRule"/>
</dbReference>
<dbReference type="CDD" id="cd01635">
    <property type="entry name" value="Glycosyltransferase_GTB-type"/>
    <property type="match status" value="1"/>
</dbReference>
<dbReference type="HAMAP" id="MF_00392">
    <property type="entry name" value="LpxB"/>
    <property type="match status" value="1"/>
</dbReference>
<dbReference type="InterPro" id="IPR003835">
    <property type="entry name" value="Glyco_trans_19"/>
</dbReference>
<dbReference type="NCBIfam" id="TIGR00215">
    <property type="entry name" value="lpxB"/>
    <property type="match status" value="1"/>
</dbReference>
<dbReference type="PANTHER" id="PTHR30372">
    <property type="entry name" value="LIPID-A-DISACCHARIDE SYNTHASE"/>
    <property type="match status" value="1"/>
</dbReference>
<dbReference type="PANTHER" id="PTHR30372:SF4">
    <property type="entry name" value="LIPID-A-DISACCHARIDE SYNTHASE, MITOCHONDRIAL-RELATED"/>
    <property type="match status" value="1"/>
</dbReference>
<dbReference type="Pfam" id="PF02684">
    <property type="entry name" value="LpxB"/>
    <property type="match status" value="1"/>
</dbReference>
<dbReference type="SUPFAM" id="SSF53756">
    <property type="entry name" value="UDP-Glycosyltransferase/glycogen phosphorylase"/>
    <property type="match status" value="1"/>
</dbReference>
<protein>
    <recommendedName>
        <fullName evidence="1">Lipid-A-disaccharide synthase</fullName>
        <ecNumber evidence="1">2.4.1.182</ecNumber>
    </recommendedName>
</protein>
<organism>
    <name type="scientific">Histophilus somni (strain 2336)</name>
    <name type="common">Haemophilus somnus</name>
    <dbReference type="NCBI Taxonomy" id="228400"/>
    <lineage>
        <taxon>Bacteria</taxon>
        <taxon>Pseudomonadati</taxon>
        <taxon>Pseudomonadota</taxon>
        <taxon>Gammaproteobacteria</taxon>
        <taxon>Pasteurellales</taxon>
        <taxon>Pasteurellaceae</taxon>
        <taxon>Histophilus</taxon>
    </lineage>
</organism>
<feature type="chain" id="PRO_1000080280" description="Lipid-A-disaccharide synthase">
    <location>
        <begin position="1"/>
        <end position="389"/>
    </location>
</feature>
<proteinExistence type="inferred from homology"/>
<evidence type="ECO:0000255" key="1">
    <source>
        <dbReference type="HAMAP-Rule" id="MF_00392"/>
    </source>
</evidence>
<gene>
    <name evidence="1" type="primary">lpxB</name>
    <name type="ordered locus">HSM_0257</name>
</gene>
<comment type="function">
    <text evidence="1">Condensation of UDP-2,3-diacylglucosamine and 2,3-diacylglucosamine-1-phosphate to form lipid A disaccharide, a precursor of lipid A, a phosphorylated glycolipid that anchors the lipopolysaccharide to the outer membrane of the cell.</text>
</comment>
<comment type="catalytic activity">
    <reaction evidence="1">
        <text>a lipid X + a UDP-2-N,3-O-bis[(3R)-3-hydroxyacyl]-alpha-D-glucosamine = a lipid A disaccharide + UDP + H(+)</text>
        <dbReference type="Rhea" id="RHEA:67828"/>
        <dbReference type="ChEBI" id="CHEBI:15378"/>
        <dbReference type="ChEBI" id="CHEBI:58223"/>
        <dbReference type="ChEBI" id="CHEBI:137748"/>
        <dbReference type="ChEBI" id="CHEBI:176338"/>
        <dbReference type="ChEBI" id="CHEBI:176343"/>
        <dbReference type="EC" id="2.4.1.182"/>
    </reaction>
</comment>
<comment type="pathway">
    <text evidence="1">Bacterial outer membrane biogenesis; LPS lipid A biosynthesis.</text>
</comment>
<comment type="similarity">
    <text evidence="1">Belongs to the LpxB family.</text>
</comment>
<accession>B0UW62</accession>
<sequence>MIDKKNITIGIVAGEVSGDILGAGLIRALKIQYPQARFIGIAGKNMLAEGCKTLVDMEDIAVMGLVEVIKYLPRLLKIRRLVIDTMLAEKPDIFIGIDAPDFNLDIELKLKKQGIKTLHYVSPSVWAWRQKRIFKIAQATNLVLAFLPFEKAFYDRFNVPCRFVGHTMADIIDLQPDRQDACFQLNLEPKHRYVAILVGSREAEVQFLTPPFLQTAQLIKQRFPDVQFLVPLVNEKRRKQFEQIKAQIAPHLEVIFLDGQARQAMIVAEASLLASGTASLECMLCKSPMVVGYKMKPFTYFLAKRLVKTKYISLPNLLADDMLVPEMIQEDCTAEKLAEKLSVYLEQTESGIKNRQHLIQQFTQLHQLIRCDADKQAAQAVIDLLNDEV</sequence>
<keyword id="KW-0328">Glycosyltransferase</keyword>
<keyword id="KW-0441">Lipid A biosynthesis</keyword>
<keyword id="KW-0444">Lipid biosynthesis</keyword>
<keyword id="KW-0443">Lipid metabolism</keyword>
<keyword id="KW-0808">Transferase</keyword>
<name>LPXB_HISS2</name>